<reference key="1">
    <citation type="journal article" date="2009" name="Environ. Microbiol.">
        <title>The genome of Polaromonas naphthalenivorans strain CJ2, isolated from coal tar-contaminated sediment, reveals physiological and metabolic versatility and evolution through extensive horizontal gene transfer.</title>
        <authorList>
            <person name="Yagi J.M."/>
            <person name="Sims D."/>
            <person name="Brettin T."/>
            <person name="Bruce D."/>
            <person name="Madsen E.L."/>
        </authorList>
    </citation>
    <scope>NUCLEOTIDE SEQUENCE [LARGE SCALE GENOMIC DNA]</scope>
    <source>
        <strain>CJ2</strain>
    </source>
</reference>
<keyword id="KW-0169">Cobalamin biosynthesis</keyword>
<keyword id="KW-0489">Methyltransferase</keyword>
<keyword id="KW-1185">Reference proteome</keyword>
<keyword id="KW-0949">S-adenosyl-L-methionine</keyword>
<keyword id="KW-0808">Transferase</keyword>
<proteinExistence type="inferred from homology"/>
<name>CBID_POLNA</name>
<accession>A1VP90</accession>
<dbReference type="EC" id="2.1.1.195" evidence="1"/>
<dbReference type="EMBL" id="CP000529">
    <property type="protein sequence ID" value="ABM37468.1"/>
    <property type="molecule type" value="Genomic_DNA"/>
</dbReference>
<dbReference type="RefSeq" id="WP_011801546.1">
    <property type="nucleotide sequence ID" value="NC_008781.1"/>
</dbReference>
<dbReference type="SMR" id="A1VP90"/>
<dbReference type="STRING" id="365044.Pnap_2160"/>
<dbReference type="KEGG" id="pna:Pnap_2160"/>
<dbReference type="eggNOG" id="COG1903">
    <property type="taxonomic scope" value="Bacteria"/>
</dbReference>
<dbReference type="HOGENOM" id="CLU_041273_0_0_4"/>
<dbReference type="OrthoDB" id="6439987at2"/>
<dbReference type="UniPathway" id="UPA00148">
    <property type="reaction ID" value="UER00227"/>
</dbReference>
<dbReference type="Proteomes" id="UP000000644">
    <property type="component" value="Chromosome"/>
</dbReference>
<dbReference type="GO" id="GO:0043780">
    <property type="term" value="F:cobalt-precorrin-5B C1-methyltransferase activity"/>
    <property type="evidence" value="ECO:0007669"/>
    <property type="project" value="RHEA"/>
</dbReference>
<dbReference type="GO" id="GO:0019251">
    <property type="term" value="P:anaerobic cobalamin biosynthetic process"/>
    <property type="evidence" value="ECO:0007669"/>
    <property type="project" value="UniProtKB-UniRule"/>
</dbReference>
<dbReference type="GO" id="GO:0032259">
    <property type="term" value="P:methylation"/>
    <property type="evidence" value="ECO:0007669"/>
    <property type="project" value="UniProtKB-KW"/>
</dbReference>
<dbReference type="Gene3D" id="3.30.2110.10">
    <property type="entry name" value="CbiD-like"/>
    <property type="match status" value="1"/>
</dbReference>
<dbReference type="HAMAP" id="MF_00787">
    <property type="entry name" value="CbiD"/>
    <property type="match status" value="1"/>
</dbReference>
<dbReference type="InterPro" id="IPR002748">
    <property type="entry name" value="CbiD"/>
</dbReference>
<dbReference type="InterPro" id="IPR036074">
    <property type="entry name" value="CbiD_sf"/>
</dbReference>
<dbReference type="NCBIfam" id="TIGR00312">
    <property type="entry name" value="cbiD"/>
    <property type="match status" value="1"/>
</dbReference>
<dbReference type="NCBIfam" id="NF000849">
    <property type="entry name" value="PRK00075.1-1"/>
    <property type="match status" value="1"/>
</dbReference>
<dbReference type="PANTHER" id="PTHR35863">
    <property type="entry name" value="COBALT-PRECORRIN-5B C(1)-METHYLTRANSFERASE"/>
    <property type="match status" value="1"/>
</dbReference>
<dbReference type="PANTHER" id="PTHR35863:SF1">
    <property type="entry name" value="COBALT-PRECORRIN-5B C(1)-METHYLTRANSFERASE"/>
    <property type="match status" value="1"/>
</dbReference>
<dbReference type="Pfam" id="PF01888">
    <property type="entry name" value="CbiD"/>
    <property type="match status" value="1"/>
</dbReference>
<dbReference type="PIRSF" id="PIRSF026782">
    <property type="entry name" value="CbiD"/>
    <property type="match status" value="1"/>
</dbReference>
<dbReference type="SUPFAM" id="SSF111342">
    <property type="entry name" value="CbiD-like"/>
    <property type="match status" value="1"/>
</dbReference>
<sequence length="365" mass="37714">MMDKNAPRGTRTGFTTGACSAAAARAATLGLVTGQVPDRIECLLPNGDLVTFSVLDGAVNGDTAHAMVIKDAGDDPDCTDKAHLTADVTLRRDLPGQVLLTGGFGVGTVTMPGLGLTVGGPAINPVPRRNITANVQAAAGELLDEAGFEVCISVPQGVEMARKTLNARLGILGGISILGTTGIVKPYSTAAYRASVVQGVQVAGTLGHGVVVLTTGGRTEKFVMAEMPHLPEPAFVQMGDFLRYAMSAAVKAGLKQVVIGGMVGKLTKIAQGETITHAGRAEVDTGLLADIAAGLGAAPEVCEAIRQNETARYAGERMDALGLGTAFHTALAQRVIQTLQARYPDKFDLKVLVCDFDGRKIAEAP</sequence>
<protein>
    <recommendedName>
        <fullName evidence="1">Cobalt-precorrin-5B C(1)-methyltransferase</fullName>
        <ecNumber evidence="1">2.1.1.195</ecNumber>
    </recommendedName>
    <alternativeName>
        <fullName evidence="1">Cobalt-precorrin-6A synthase</fullName>
    </alternativeName>
</protein>
<gene>
    <name evidence="1" type="primary">cbiD</name>
    <name type="ordered locus">Pnap_2160</name>
</gene>
<feature type="chain" id="PRO_1000046870" description="Cobalt-precorrin-5B C(1)-methyltransferase">
    <location>
        <begin position="1"/>
        <end position="365"/>
    </location>
</feature>
<evidence type="ECO:0000255" key="1">
    <source>
        <dbReference type="HAMAP-Rule" id="MF_00787"/>
    </source>
</evidence>
<comment type="function">
    <text evidence="1">Catalyzes the methylation of C-1 in cobalt-precorrin-5B to form cobalt-precorrin-6A.</text>
</comment>
<comment type="catalytic activity">
    <reaction evidence="1">
        <text>Co-precorrin-5B + S-adenosyl-L-methionine = Co-precorrin-6A + S-adenosyl-L-homocysteine</text>
        <dbReference type="Rhea" id="RHEA:26285"/>
        <dbReference type="ChEBI" id="CHEBI:57856"/>
        <dbReference type="ChEBI" id="CHEBI:59789"/>
        <dbReference type="ChEBI" id="CHEBI:60063"/>
        <dbReference type="ChEBI" id="CHEBI:60064"/>
        <dbReference type="EC" id="2.1.1.195"/>
    </reaction>
</comment>
<comment type="pathway">
    <text evidence="1">Cofactor biosynthesis; adenosylcobalamin biosynthesis; cob(II)yrinate a,c-diamide from sirohydrochlorin (anaerobic route): step 6/10.</text>
</comment>
<comment type="similarity">
    <text evidence="1">Belongs to the CbiD family.</text>
</comment>
<organism>
    <name type="scientific">Polaromonas naphthalenivorans (strain CJ2)</name>
    <dbReference type="NCBI Taxonomy" id="365044"/>
    <lineage>
        <taxon>Bacteria</taxon>
        <taxon>Pseudomonadati</taxon>
        <taxon>Pseudomonadota</taxon>
        <taxon>Betaproteobacteria</taxon>
        <taxon>Burkholderiales</taxon>
        <taxon>Comamonadaceae</taxon>
        <taxon>Polaromonas</taxon>
    </lineage>
</organism>